<keyword id="KW-1185">Reference proteome</keyword>
<keyword id="KW-0708">Seed storage protein</keyword>
<keyword id="KW-0732">Signal</keyword>
<keyword id="KW-0758">Storage protein</keyword>
<comment type="function">
    <text evidence="8">Zeins are major seed storage proteins.</text>
</comment>
<comment type="subunit">
    <text evidence="4">Interacts with OP10 (via N-terminus).</text>
</comment>
<comment type="tissue specificity">
    <text evidence="3">Expressed in endosperm, mainly in the peripheral regions.</text>
</comment>
<comment type="miscellaneous">
    <text evidence="7">The alpha zeins of 19 kDa and 22 kDa account for 70% of the total zein fraction. They are encoded by a large multigene family.</text>
</comment>
<comment type="miscellaneous">
    <text evidence="1">Structurally, 22K and 19K zeins are composed of nine adjacent, topologically antiparallel helices clustered within a distorted cylinder.</text>
</comment>
<comment type="similarity">
    <text evidence="7">Belongs to the zein family.</text>
</comment>
<proteinExistence type="evidence at protein level"/>
<gene>
    <name evidence="6" type="primary">AZS22-4</name>
    <name evidence="5" type="synonym">AZ22Z3</name>
    <name evidence="10" type="ORF">ZEAMMB73_535631</name>
</gene>
<protein>
    <recommendedName>
        <fullName evidence="6">22 kDa alpha-zein 4</fullName>
    </recommendedName>
    <alternativeName>
        <fullName evidence="7">22 kDa alpha-zein PZ22.3</fullName>
    </alternativeName>
    <alternativeName>
        <fullName evidence="5">22kD alpha-zein 3</fullName>
    </alternativeName>
    <alternativeName>
        <fullName evidence="10">Zein-alpha PZ22.3</fullName>
    </alternativeName>
</protein>
<evidence type="ECO:0000250" key="1">
    <source>
        <dbReference type="UniProtKB" id="P04698"/>
    </source>
</evidence>
<evidence type="ECO:0000255" key="2"/>
<evidence type="ECO:0000269" key="3">
    <source>
    </source>
</evidence>
<evidence type="ECO:0000269" key="4">
    <source>
    </source>
</evidence>
<evidence type="ECO:0000303" key="5">
    <source>
    </source>
</evidence>
<evidence type="ECO:0000303" key="6">
    <source>
    </source>
</evidence>
<evidence type="ECO:0000305" key="7"/>
<evidence type="ECO:0000305" key="8">
    <source>
    </source>
</evidence>
<evidence type="ECO:0000312" key="9">
    <source>
        <dbReference type="EMBL" id="AAC01573.1"/>
    </source>
</evidence>
<evidence type="ECO:0000312" key="10">
    <source>
        <dbReference type="EMBL" id="AFW60330.1"/>
    </source>
</evidence>
<sequence>MATKILSLLALLALFASATNAFIIPQCSLAPSSIITQFLPPVTSMGFEHPAVQAYRLQQAIAASVLQQPISQLQQQSLAHLTIQTIATQQQQQFLPALSHLAMVNPAAYLQQQLLASNPLALANVVANQPQQQLQQFLPALSQLAMVNPAAYLQQQQLLSSSPLAVANAPTYLQQQLLQQIVPALTQLVVANPAAYLQQLLPFNQLTMSNSAAYLQQRQQLLNPLAVANPLVAAFLQQQQLLPYNQFSLINPVLSRQQPIVGGAIF</sequence>
<reference key="1">
    <citation type="journal article" date="2001" name="Genome Res.">
        <title>Sequence, regulation, and evolution of the maize 22-kD alpha zein gene family.</title>
        <authorList>
            <person name="Song R."/>
            <person name="Llaca V."/>
            <person name="Linton E."/>
            <person name="Messing J."/>
        </authorList>
    </citation>
    <scope>NUCLEOTIDE SEQUENCE [GENOMIC DNA]</scope>
    <scope>GENE FAMILY</scope>
    <scope>NOMENCLATURE</scope>
</reference>
<reference key="2">
    <citation type="journal article" date="2001" name="Plant Cell">
        <title>Genomics analysis of genes expressed in maize endosperm identifies novel seed proteins and clarifies patterns of zein gene expression.</title>
        <authorList>
            <person name="Woo Y.M."/>
            <person name="Hu D.W."/>
            <person name="Larkins B.A."/>
            <person name="Jung R."/>
        </authorList>
    </citation>
    <scope>NUCLEOTIDE SEQUENCE [MRNA]</scope>
    <scope>TISSUE SPECIFICITY</scope>
    <source>
        <strain>cv. B73</strain>
        <tissue>Endosperm</tissue>
    </source>
</reference>
<reference key="3">
    <citation type="journal article" date="2009" name="Science">
        <title>The B73 maize genome: complexity, diversity, and dynamics.</title>
        <authorList>
            <person name="Schnable P.S."/>
            <person name="Ware D."/>
            <person name="Fulton R.S."/>
            <person name="Stein J.C."/>
            <person name="Wei F."/>
            <person name="Pasternak S."/>
            <person name="Liang C."/>
            <person name="Zhang J."/>
            <person name="Fulton L."/>
            <person name="Graves T.A."/>
            <person name="Minx P."/>
            <person name="Reily A.D."/>
            <person name="Courtney L."/>
            <person name="Kruchowski S.S."/>
            <person name="Tomlinson C."/>
            <person name="Strong C."/>
            <person name="Delehaunty K."/>
            <person name="Fronick C."/>
            <person name="Courtney B."/>
            <person name="Rock S.M."/>
            <person name="Belter E."/>
            <person name="Du F."/>
            <person name="Kim K."/>
            <person name="Abbott R.M."/>
            <person name="Cotton M."/>
            <person name="Levy A."/>
            <person name="Marchetto P."/>
            <person name="Ochoa K."/>
            <person name="Jackson S.M."/>
            <person name="Gillam B."/>
            <person name="Chen W."/>
            <person name="Yan L."/>
            <person name="Higginbotham J."/>
            <person name="Cardenas M."/>
            <person name="Waligorski J."/>
            <person name="Applebaum E."/>
            <person name="Phelps L."/>
            <person name="Falcone J."/>
            <person name="Kanchi K."/>
            <person name="Thane T."/>
            <person name="Scimone A."/>
            <person name="Thane N."/>
            <person name="Henke J."/>
            <person name="Wang T."/>
            <person name="Ruppert J."/>
            <person name="Shah N."/>
            <person name="Rotter K."/>
            <person name="Hodges J."/>
            <person name="Ingenthron E."/>
            <person name="Cordes M."/>
            <person name="Kohlberg S."/>
            <person name="Sgro J."/>
            <person name="Delgado B."/>
            <person name="Mead K."/>
            <person name="Chinwalla A."/>
            <person name="Leonard S."/>
            <person name="Crouse K."/>
            <person name="Collura K."/>
            <person name="Kudrna D."/>
            <person name="Currie J."/>
            <person name="He R."/>
            <person name="Angelova A."/>
            <person name="Rajasekar S."/>
            <person name="Mueller T."/>
            <person name="Lomeli R."/>
            <person name="Scara G."/>
            <person name="Ko A."/>
            <person name="Delaney K."/>
            <person name="Wissotski M."/>
            <person name="Lopez G."/>
            <person name="Campos D."/>
            <person name="Braidotti M."/>
            <person name="Ashley E."/>
            <person name="Golser W."/>
            <person name="Kim H."/>
            <person name="Lee S."/>
            <person name="Lin J."/>
            <person name="Dujmic Z."/>
            <person name="Kim W."/>
            <person name="Talag J."/>
            <person name="Zuccolo A."/>
            <person name="Fan C."/>
            <person name="Sebastian A."/>
            <person name="Kramer M."/>
            <person name="Spiegel L."/>
            <person name="Nascimento L."/>
            <person name="Zutavern T."/>
            <person name="Miller B."/>
            <person name="Ambroise C."/>
            <person name="Muller S."/>
            <person name="Spooner W."/>
            <person name="Narechania A."/>
            <person name="Ren L."/>
            <person name="Wei S."/>
            <person name="Kumari S."/>
            <person name="Faga B."/>
            <person name="Levy M.J."/>
            <person name="McMahan L."/>
            <person name="Van Buren P."/>
            <person name="Vaughn M.W."/>
            <person name="Ying K."/>
            <person name="Yeh C.-T."/>
            <person name="Emrich S.J."/>
            <person name="Jia Y."/>
            <person name="Kalyanaraman A."/>
            <person name="Hsia A.-P."/>
            <person name="Barbazuk W.B."/>
            <person name="Baucom R.S."/>
            <person name="Brutnell T.P."/>
            <person name="Carpita N.C."/>
            <person name="Chaparro C."/>
            <person name="Chia J.-M."/>
            <person name="Deragon J.-M."/>
            <person name="Estill J.C."/>
            <person name="Fu Y."/>
            <person name="Jeddeloh J.A."/>
            <person name="Han Y."/>
            <person name="Lee H."/>
            <person name="Li P."/>
            <person name="Lisch D.R."/>
            <person name="Liu S."/>
            <person name="Liu Z."/>
            <person name="Nagel D.H."/>
            <person name="McCann M.C."/>
            <person name="SanMiguel P."/>
            <person name="Myers A.M."/>
            <person name="Nettleton D."/>
            <person name="Nguyen J."/>
            <person name="Penning B.W."/>
            <person name="Ponnala L."/>
            <person name="Schneider K.L."/>
            <person name="Schwartz D.C."/>
            <person name="Sharma A."/>
            <person name="Soderlund C."/>
            <person name="Springer N.M."/>
            <person name="Sun Q."/>
            <person name="Wang H."/>
            <person name="Waterman M."/>
            <person name="Westerman R."/>
            <person name="Wolfgruber T.K."/>
            <person name="Yang L."/>
            <person name="Yu Y."/>
            <person name="Zhang L."/>
            <person name="Zhou S."/>
            <person name="Zhu Q."/>
            <person name="Bennetzen J.L."/>
            <person name="Dawe R.K."/>
            <person name="Jiang J."/>
            <person name="Jiang N."/>
            <person name="Presting G.G."/>
            <person name="Wessler S.R."/>
            <person name="Aluru S."/>
            <person name="Martienssen R.A."/>
            <person name="Clifton S.W."/>
            <person name="McCombie W.R."/>
            <person name="Wing R.A."/>
            <person name="Wilson R.K."/>
        </authorList>
    </citation>
    <scope>NUCLEOTIDE SEQUENCE [LARGE SCALE GENOMIC DNA]</scope>
    <source>
        <strain>cv. B73</strain>
    </source>
</reference>
<reference key="4">
    <citation type="journal article" date="2016" name="PLoS Genet.">
        <title>Maize opaque10 encodes a cereal-specific protein that is essential for the proper distribution of zeins in endosperm protein bodies.</title>
        <authorList>
            <person name="Yao D."/>
            <person name="Qi W."/>
            <person name="Li X."/>
            <person name="Yang Q."/>
            <person name="Yan S."/>
            <person name="Ling H."/>
            <person name="Wang G."/>
            <person name="Wang G."/>
            <person name="Song R."/>
        </authorList>
    </citation>
    <scope>INTERACTION WITH OP10</scope>
</reference>
<feature type="signal peptide" evidence="2">
    <location>
        <begin position="1"/>
        <end position="21"/>
    </location>
</feature>
<feature type="chain" id="PRO_5007696878" description="22 kDa alpha-zein 4" evidence="2">
    <location>
        <begin position="22"/>
        <end position="266"/>
    </location>
</feature>
<accession>O48966</accession>
<name>ZEAU_MAIZE</name>
<organism evidence="9">
    <name type="scientific">Zea mays</name>
    <name type="common">Maize</name>
    <dbReference type="NCBI Taxonomy" id="4577"/>
    <lineage>
        <taxon>Eukaryota</taxon>
        <taxon>Viridiplantae</taxon>
        <taxon>Streptophyta</taxon>
        <taxon>Embryophyta</taxon>
        <taxon>Tracheophyta</taxon>
        <taxon>Spermatophyta</taxon>
        <taxon>Magnoliopsida</taxon>
        <taxon>Liliopsida</taxon>
        <taxon>Poales</taxon>
        <taxon>Poaceae</taxon>
        <taxon>PACMAD clade</taxon>
        <taxon>Panicoideae</taxon>
        <taxon>Andropogonodae</taxon>
        <taxon>Andropogoneae</taxon>
        <taxon>Tripsacinae</taxon>
        <taxon>Zea</taxon>
    </lineage>
</organism>
<dbReference type="EMBL" id="AF031569">
    <property type="protein sequence ID" value="AAC01573.1"/>
    <property type="molecule type" value="Genomic_DNA"/>
</dbReference>
<dbReference type="EMBL" id="AF371275">
    <property type="protein sequence ID" value="AAL16990.1"/>
    <property type="molecule type" value="mRNA"/>
</dbReference>
<dbReference type="EMBL" id="CM000780">
    <property type="protein sequence ID" value="AFW60330.1"/>
    <property type="molecule type" value="Genomic_DNA"/>
</dbReference>
<dbReference type="PIR" id="T01323">
    <property type="entry name" value="T01323"/>
</dbReference>
<dbReference type="RefSeq" id="NP_001105058.1">
    <property type="nucleotide sequence ID" value="NM_001111588.2"/>
</dbReference>
<dbReference type="STRING" id="4577.O48966"/>
<dbReference type="PaxDb" id="4577-GRMZM2G044625_P01"/>
<dbReference type="GeneID" id="541925"/>
<dbReference type="KEGG" id="zma:541925"/>
<dbReference type="eggNOG" id="ENOG502R48M">
    <property type="taxonomic scope" value="Eukaryota"/>
</dbReference>
<dbReference type="HOGENOM" id="CLU_073697_0_0_1"/>
<dbReference type="InParanoid" id="O48966"/>
<dbReference type="OMA" id="MANPVAY"/>
<dbReference type="OrthoDB" id="688966at2759"/>
<dbReference type="Proteomes" id="UP000007305">
    <property type="component" value="Unplaced"/>
</dbReference>
<dbReference type="ExpressionAtlas" id="O48966">
    <property type="expression patterns" value="baseline and differential"/>
</dbReference>
<dbReference type="GO" id="GO:0045735">
    <property type="term" value="F:nutrient reservoir activity"/>
    <property type="evidence" value="ECO:0007669"/>
    <property type="project" value="UniProtKB-KW"/>
</dbReference>
<dbReference type="InterPro" id="IPR052508">
    <property type="entry name" value="Maize_Zein_Storage"/>
</dbReference>
<dbReference type="InterPro" id="IPR002530">
    <property type="entry name" value="Zein"/>
</dbReference>
<dbReference type="PANTHER" id="PTHR48244:SF3">
    <property type="entry name" value="22 KDA ALPHA-ZEIN 8"/>
    <property type="match status" value="1"/>
</dbReference>
<dbReference type="PANTHER" id="PTHR48244">
    <property type="entry name" value="ZEIN-ALPHA A20-RELATED"/>
    <property type="match status" value="1"/>
</dbReference>
<dbReference type="Pfam" id="PF01559">
    <property type="entry name" value="Zein"/>
    <property type="match status" value="1"/>
</dbReference>